<dbReference type="EC" id="2.5.1.145" evidence="1"/>
<dbReference type="EMBL" id="AE017180">
    <property type="protein sequence ID" value="AAR34800.1"/>
    <property type="molecule type" value="Genomic_DNA"/>
</dbReference>
<dbReference type="RefSeq" id="NP_952477.1">
    <property type="nucleotide sequence ID" value="NC_002939.5"/>
</dbReference>
<dbReference type="RefSeq" id="WP_010942073.1">
    <property type="nucleotide sequence ID" value="NC_002939.5"/>
</dbReference>
<dbReference type="SMR" id="P60970"/>
<dbReference type="FunCoup" id="P60970">
    <property type="interactions" value="378"/>
</dbReference>
<dbReference type="STRING" id="243231.GSU1425"/>
<dbReference type="EnsemblBacteria" id="AAR34800">
    <property type="protein sequence ID" value="AAR34800"/>
    <property type="gene ID" value="GSU1425"/>
</dbReference>
<dbReference type="KEGG" id="gsu:GSU1425"/>
<dbReference type="PATRIC" id="fig|243231.5.peg.1471"/>
<dbReference type="eggNOG" id="COG0682">
    <property type="taxonomic scope" value="Bacteria"/>
</dbReference>
<dbReference type="HOGENOM" id="CLU_013386_1_0_7"/>
<dbReference type="InParanoid" id="P60970"/>
<dbReference type="OrthoDB" id="871140at2"/>
<dbReference type="UniPathway" id="UPA00664"/>
<dbReference type="Proteomes" id="UP000000577">
    <property type="component" value="Chromosome"/>
</dbReference>
<dbReference type="GO" id="GO:0005886">
    <property type="term" value="C:plasma membrane"/>
    <property type="evidence" value="ECO:0000318"/>
    <property type="project" value="GO_Central"/>
</dbReference>
<dbReference type="GO" id="GO:0008961">
    <property type="term" value="F:phosphatidylglycerol-prolipoprotein diacylglyceryl transferase activity"/>
    <property type="evidence" value="ECO:0000318"/>
    <property type="project" value="GO_Central"/>
</dbReference>
<dbReference type="GO" id="GO:0042158">
    <property type="term" value="P:lipoprotein biosynthetic process"/>
    <property type="evidence" value="ECO:0000318"/>
    <property type="project" value="GO_Central"/>
</dbReference>
<dbReference type="HAMAP" id="MF_01147">
    <property type="entry name" value="Lgt"/>
    <property type="match status" value="1"/>
</dbReference>
<dbReference type="InterPro" id="IPR001640">
    <property type="entry name" value="Lgt"/>
</dbReference>
<dbReference type="NCBIfam" id="TIGR00544">
    <property type="entry name" value="lgt"/>
    <property type="match status" value="1"/>
</dbReference>
<dbReference type="PANTHER" id="PTHR30589:SF0">
    <property type="entry name" value="PHOSPHATIDYLGLYCEROL--PROLIPOPROTEIN DIACYLGLYCERYL TRANSFERASE"/>
    <property type="match status" value="1"/>
</dbReference>
<dbReference type="PANTHER" id="PTHR30589">
    <property type="entry name" value="PROLIPOPROTEIN DIACYLGLYCERYL TRANSFERASE"/>
    <property type="match status" value="1"/>
</dbReference>
<dbReference type="Pfam" id="PF01790">
    <property type="entry name" value="LGT"/>
    <property type="match status" value="1"/>
</dbReference>
<dbReference type="PROSITE" id="PS01311">
    <property type="entry name" value="LGT"/>
    <property type="match status" value="1"/>
</dbReference>
<keyword id="KW-0997">Cell inner membrane</keyword>
<keyword id="KW-1003">Cell membrane</keyword>
<keyword id="KW-0472">Membrane</keyword>
<keyword id="KW-1185">Reference proteome</keyword>
<keyword id="KW-0808">Transferase</keyword>
<keyword id="KW-0812">Transmembrane</keyword>
<keyword id="KW-1133">Transmembrane helix</keyword>
<organism>
    <name type="scientific">Geobacter sulfurreducens (strain ATCC 51573 / DSM 12127 / PCA)</name>
    <dbReference type="NCBI Taxonomy" id="243231"/>
    <lineage>
        <taxon>Bacteria</taxon>
        <taxon>Pseudomonadati</taxon>
        <taxon>Thermodesulfobacteriota</taxon>
        <taxon>Desulfuromonadia</taxon>
        <taxon>Geobacterales</taxon>
        <taxon>Geobacteraceae</taxon>
        <taxon>Geobacter</taxon>
    </lineage>
</organism>
<protein>
    <recommendedName>
        <fullName evidence="1">Phosphatidylglycerol--prolipoprotein diacylglyceryl transferase</fullName>
        <ecNumber evidence="1">2.5.1.145</ecNumber>
    </recommendedName>
</protein>
<gene>
    <name evidence="1" type="primary">lgt</name>
    <name type="ordered locus">GSU1425</name>
</gene>
<proteinExistence type="inferred from homology"/>
<name>LGT_GEOSL</name>
<reference key="1">
    <citation type="journal article" date="2003" name="Science">
        <title>Genome of Geobacter sulfurreducens: metal reduction in subsurface environments.</title>
        <authorList>
            <person name="Methe B.A."/>
            <person name="Nelson K.E."/>
            <person name="Eisen J.A."/>
            <person name="Paulsen I.T."/>
            <person name="Nelson W.C."/>
            <person name="Heidelberg J.F."/>
            <person name="Wu D."/>
            <person name="Wu M."/>
            <person name="Ward N.L."/>
            <person name="Beanan M.J."/>
            <person name="Dodson R.J."/>
            <person name="Madupu R."/>
            <person name="Brinkac L.M."/>
            <person name="Daugherty S.C."/>
            <person name="DeBoy R.T."/>
            <person name="Durkin A.S."/>
            <person name="Gwinn M.L."/>
            <person name="Kolonay J.F."/>
            <person name="Sullivan S.A."/>
            <person name="Haft D.H."/>
            <person name="Selengut J."/>
            <person name="Davidsen T.M."/>
            <person name="Zafar N."/>
            <person name="White O."/>
            <person name="Tran B."/>
            <person name="Romero C."/>
            <person name="Forberger H.A."/>
            <person name="Weidman J.F."/>
            <person name="Khouri H.M."/>
            <person name="Feldblyum T.V."/>
            <person name="Utterback T.R."/>
            <person name="Van Aken S.E."/>
            <person name="Lovley D.R."/>
            <person name="Fraser C.M."/>
        </authorList>
    </citation>
    <scope>NUCLEOTIDE SEQUENCE [LARGE SCALE GENOMIC DNA]</scope>
    <source>
        <strain>ATCC 51573 / DSM 12127 / PCA</strain>
    </source>
</reference>
<accession>P60970</accession>
<sequence>MQFPHIDPVFFRLGHLEFRWYGLMYILGFIAAYFIVRRAAGRRGLALTQDDVADVIFSLAIGVILGGRLGYILFYNLSYYLSHPLKLFAVWEGGMSFHGGLLGVILAGVYVARQKKIGFPVLADICAPAAPVGLGLGRLGNFINGELYGRVTDVPWGIIFPGGGGVPRHPSQLYEAVLEGPVLFLILMAVGRRERPAGVVFWTFIAFYGLFRFLVEFFREPDAQLGLLAGPFSMGQLLSFPMFLLGLTMAVLVSRRKVGP</sequence>
<comment type="function">
    <text evidence="1">Catalyzes the transfer of the diacylglyceryl group from phosphatidylglycerol to the sulfhydryl group of the N-terminal cysteine of a prolipoprotein, the first step in the formation of mature lipoproteins.</text>
</comment>
<comment type="catalytic activity">
    <reaction evidence="1">
        <text>L-cysteinyl-[prolipoprotein] + a 1,2-diacyl-sn-glycero-3-phospho-(1'-sn-glycerol) = an S-1,2-diacyl-sn-glyceryl-L-cysteinyl-[prolipoprotein] + sn-glycerol 1-phosphate + H(+)</text>
        <dbReference type="Rhea" id="RHEA:56712"/>
        <dbReference type="Rhea" id="RHEA-COMP:14679"/>
        <dbReference type="Rhea" id="RHEA-COMP:14680"/>
        <dbReference type="ChEBI" id="CHEBI:15378"/>
        <dbReference type="ChEBI" id="CHEBI:29950"/>
        <dbReference type="ChEBI" id="CHEBI:57685"/>
        <dbReference type="ChEBI" id="CHEBI:64716"/>
        <dbReference type="ChEBI" id="CHEBI:140658"/>
        <dbReference type="EC" id="2.5.1.145"/>
    </reaction>
</comment>
<comment type="pathway">
    <text evidence="1">Protein modification; lipoprotein biosynthesis (diacylglyceryl transfer).</text>
</comment>
<comment type="subcellular location">
    <subcellularLocation>
        <location evidence="1">Cell inner membrane</location>
        <topology evidence="1">Multi-pass membrane protein</topology>
    </subcellularLocation>
</comment>
<comment type="similarity">
    <text evidence="1">Belongs to the Lgt family.</text>
</comment>
<feature type="chain" id="PRO_0000172606" description="Phosphatidylglycerol--prolipoprotein diacylglyceryl transferase">
    <location>
        <begin position="1"/>
        <end position="260"/>
    </location>
</feature>
<feature type="transmembrane region" description="Helical" evidence="1">
    <location>
        <begin position="16"/>
        <end position="36"/>
    </location>
</feature>
<feature type="transmembrane region" description="Helical" evidence="1">
    <location>
        <begin position="55"/>
        <end position="75"/>
    </location>
</feature>
<feature type="transmembrane region" description="Helical" evidence="1">
    <location>
        <begin position="87"/>
        <end position="107"/>
    </location>
</feature>
<feature type="transmembrane region" description="Helical" evidence="1">
    <location>
        <begin position="198"/>
        <end position="218"/>
    </location>
</feature>
<feature type="transmembrane region" description="Helical" evidence="1">
    <location>
        <begin position="232"/>
        <end position="252"/>
    </location>
</feature>
<feature type="binding site" evidence="1">
    <location>
        <position position="138"/>
    </location>
    <ligand>
        <name>a 1,2-diacyl-sn-glycero-3-phospho-(1'-sn-glycerol)</name>
        <dbReference type="ChEBI" id="CHEBI:64716"/>
    </ligand>
</feature>
<evidence type="ECO:0000255" key="1">
    <source>
        <dbReference type="HAMAP-Rule" id="MF_01147"/>
    </source>
</evidence>